<proteinExistence type="inferred from homology"/>
<feature type="chain" id="PRO_0000347614" description="Alanine--tRNA ligase">
    <location>
        <begin position="1"/>
        <end position="865"/>
    </location>
</feature>
<feature type="binding site" evidence="1">
    <location>
        <position position="554"/>
    </location>
    <ligand>
        <name>Zn(2+)</name>
        <dbReference type="ChEBI" id="CHEBI:29105"/>
    </ligand>
</feature>
<feature type="binding site" evidence="1">
    <location>
        <position position="558"/>
    </location>
    <ligand>
        <name>Zn(2+)</name>
        <dbReference type="ChEBI" id="CHEBI:29105"/>
    </ligand>
</feature>
<feature type="binding site" evidence="1">
    <location>
        <position position="656"/>
    </location>
    <ligand>
        <name>Zn(2+)</name>
        <dbReference type="ChEBI" id="CHEBI:29105"/>
    </ligand>
</feature>
<feature type="binding site" evidence="1">
    <location>
        <position position="660"/>
    </location>
    <ligand>
        <name>Zn(2+)</name>
        <dbReference type="ChEBI" id="CHEBI:29105"/>
    </ligand>
</feature>
<gene>
    <name evidence="1" type="primary">alaS</name>
    <name type="ordered locus">FTN_0778</name>
</gene>
<accession>A0Q604</accession>
<keyword id="KW-0030">Aminoacyl-tRNA synthetase</keyword>
<keyword id="KW-0067">ATP-binding</keyword>
<keyword id="KW-0963">Cytoplasm</keyword>
<keyword id="KW-0436">Ligase</keyword>
<keyword id="KW-0479">Metal-binding</keyword>
<keyword id="KW-0547">Nucleotide-binding</keyword>
<keyword id="KW-0648">Protein biosynthesis</keyword>
<keyword id="KW-0694">RNA-binding</keyword>
<keyword id="KW-0820">tRNA-binding</keyword>
<keyword id="KW-0862">Zinc</keyword>
<name>SYA_FRATN</name>
<reference key="1">
    <citation type="journal article" date="2007" name="Genome Biol.">
        <title>Comparison of Francisella tularensis genomes reveals evolutionary events associated with the emergence of human pathogenic strains.</title>
        <authorList>
            <person name="Rohmer L."/>
            <person name="Fong C."/>
            <person name="Abmayr S."/>
            <person name="Wasnick M."/>
            <person name="Larson Freeman T.J."/>
            <person name="Radey M."/>
            <person name="Guina T."/>
            <person name="Svensson K."/>
            <person name="Hayden H.S."/>
            <person name="Jacobs M."/>
            <person name="Gallagher L.A."/>
            <person name="Manoil C."/>
            <person name="Ernst R.K."/>
            <person name="Drees B."/>
            <person name="Buckley D."/>
            <person name="Haugen E."/>
            <person name="Bovee D."/>
            <person name="Zhou Y."/>
            <person name="Chang J."/>
            <person name="Levy R."/>
            <person name="Lim R."/>
            <person name="Gillett W."/>
            <person name="Guenthener D."/>
            <person name="Kang A."/>
            <person name="Shaffer S.A."/>
            <person name="Taylor G."/>
            <person name="Chen J."/>
            <person name="Gallis B."/>
            <person name="D'Argenio D.A."/>
            <person name="Forsman M."/>
            <person name="Olson M.V."/>
            <person name="Goodlett D.R."/>
            <person name="Kaul R."/>
            <person name="Miller S.I."/>
            <person name="Brittnacher M.J."/>
        </authorList>
    </citation>
    <scope>NUCLEOTIDE SEQUENCE [LARGE SCALE GENOMIC DNA]</scope>
    <source>
        <strain>U112</strain>
    </source>
</reference>
<protein>
    <recommendedName>
        <fullName evidence="1">Alanine--tRNA ligase</fullName>
        <ecNumber evidence="1">6.1.1.7</ecNumber>
    </recommendedName>
    <alternativeName>
        <fullName evidence="1">Alanyl-tRNA synthetase</fullName>
        <shortName evidence="1">AlaRS</shortName>
    </alternativeName>
</protein>
<comment type="function">
    <text evidence="1">Catalyzes the attachment of alanine to tRNA(Ala) in a two-step reaction: alanine is first activated by ATP to form Ala-AMP and then transferred to the acceptor end of tRNA(Ala). Also edits incorrectly charged Ser-tRNA(Ala) and Gly-tRNA(Ala) via its editing domain.</text>
</comment>
<comment type="catalytic activity">
    <reaction evidence="1">
        <text>tRNA(Ala) + L-alanine + ATP = L-alanyl-tRNA(Ala) + AMP + diphosphate</text>
        <dbReference type="Rhea" id="RHEA:12540"/>
        <dbReference type="Rhea" id="RHEA-COMP:9657"/>
        <dbReference type="Rhea" id="RHEA-COMP:9923"/>
        <dbReference type="ChEBI" id="CHEBI:30616"/>
        <dbReference type="ChEBI" id="CHEBI:33019"/>
        <dbReference type="ChEBI" id="CHEBI:57972"/>
        <dbReference type="ChEBI" id="CHEBI:78442"/>
        <dbReference type="ChEBI" id="CHEBI:78497"/>
        <dbReference type="ChEBI" id="CHEBI:456215"/>
        <dbReference type="EC" id="6.1.1.7"/>
    </reaction>
</comment>
<comment type="cofactor">
    <cofactor evidence="1">
        <name>Zn(2+)</name>
        <dbReference type="ChEBI" id="CHEBI:29105"/>
    </cofactor>
    <text evidence="1">Binds 1 zinc ion per subunit.</text>
</comment>
<comment type="subcellular location">
    <subcellularLocation>
        <location evidence="1">Cytoplasm</location>
    </subcellularLocation>
</comment>
<comment type="domain">
    <text evidence="1">Consists of three domains; the N-terminal catalytic domain, the editing domain and the C-terminal C-Ala domain. The editing domain removes incorrectly charged amino acids, while the C-Ala domain, along with tRNA(Ala), serves as a bridge to cooperatively bring together the editing and aminoacylation centers thus stimulating deacylation of misacylated tRNAs.</text>
</comment>
<comment type="similarity">
    <text evidence="1">Belongs to the class-II aminoacyl-tRNA synthetase family.</text>
</comment>
<dbReference type="EC" id="6.1.1.7" evidence="1"/>
<dbReference type="EMBL" id="CP000439">
    <property type="protein sequence ID" value="ABK89669.1"/>
    <property type="molecule type" value="Genomic_DNA"/>
</dbReference>
<dbReference type="RefSeq" id="WP_003038961.1">
    <property type="nucleotide sequence ID" value="NC_008601.1"/>
</dbReference>
<dbReference type="SMR" id="A0Q604"/>
<dbReference type="KEGG" id="ftn:FTN_0778"/>
<dbReference type="KEGG" id="ftx:AW25_1243"/>
<dbReference type="BioCyc" id="FTUL401614:G1G75-811-MONOMER"/>
<dbReference type="Proteomes" id="UP000000762">
    <property type="component" value="Chromosome"/>
</dbReference>
<dbReference type="GO" id="GO:0005829">
    <property type="term" value="C:cytosol"/>
    <property type="evidence" value="ECO:0007669"/>
    <property type="project" value="TreeGrafter"/>
</dbReference>
<dbReference type="GO" id="GO:0004813">
    <property type="term" value="F:alanine-tRNA ligase activity"/>
    <property type="evidence" value="ECO:0007669"/>
    <property type="project" value="UniProtKB-UniRule"/>
</dbReference>
<dbReference type="GO" id="GO:0002161">
    <property type="term" value="F:aminoacyl-tRNA deacylase activity"/>
    <property type="evidence" value="ECO:0007669"/>
    <property type="project" value="TreeGrafter"/>
</dbReference>
<dbReference type="GO" id="GO:0005524">
    <property type="term" value="F:ATP binding"/>
    <property type="evidence" value="ECO:0007669"/>
    <property type="project" value="UniProtKB-UniRule"/>
</dbReference>
<dbReference type="GO" id="GO:0000049">
    <property type="term" value="F:tRNA binding"/>
    <property type="evidence" value="ECO:0007669"/>
    <property type="project" value="UniProtKB-KW"/>
</dbReference>
<dbReference type="GO" id="GO:0008270">
    <property type="term" value="F:zinc ion binding"/>
    <property type="evidence" value="ECO:0007669"/>
    <property type="project" value="UniProtKB-UniRule"/>
</dbReference>
<dbReference type="GO" id="GO:0006419">
    <property type="term" value="P:alanyl-tRNA aminoacylation"/>
    <property type="evidence" value="ECO:0007669"/>
    <property type="project" value="UniProtKB-UniRule"/>
</dbReference>
<dbReference type="GO" id="GO:0045892">
    <property type="term" value="P:negative regulation of DNA-templated transcription"/>
    <property type="evidence" value="ECO:0007669"/>
    <property type="project" value="TreeGrafter"/>
</dbReference>
<dbReference type="CDD" id="cd00673">
    <property type="entry name" value="AlaRS_core"/>
    <property type="match status" value="1"/>
</dbReference>
<dbReference type="FunFam" id="2.40.30.130:FF:000001">
    <property type="entry name" value="Alanine--tRNA ligase"/>
    <property type="match status" value="1"/>
</dbReference>
<dbReference type="FunFam" id="3.10.310.40:FF:000001">
    <property type="entry name" value="Alanine--tRNA ligase"/>
    <property type="match status" value="1"/>
</dbReference>
<dbReference type="FunFam" id="3.30.54.20:FF:000001">
    <property type="entry name" value="Alanine--tRNA ligase"/>
    <property type="match status" value="1"/>
</dbReference>
<dbReference type="FunFam" id="3.30.930.10:FF:000004">
    <property type="entry name" value="Alanine--tRNA ligase"/>
    <property type="match status" value="1"/>
</dbReference>
<dbReference type="FunFam" id="3.30.980.10:FF:000004">
    <property type="entry name" value="Alanine--tRNA ligase, cytoplasmic"/>
    <property type="match status" value="1"/>
</dbReference>
<dbReference type="Gene3D" id="2.40.30.130">
    <property type="match status" value="1"/>
</dbReference>
<dbReference type="Gene3D" id="3.10.310.40">
    <property type="match status" value="1"/>
</dbReference>
<dbReference type="Gene3D" id="3.30.54.20">
    <property type="match status" value="1"/>
</dbReference>
<dbReference type="Gene3D" id="6.10.250.550">
    <property type="match status" value="1"/>
</dbReference>
<dbReference type="Gene3D" id="3.30.930.10">
    <property type="entry name" value="Bira Bifunctional Protein, Domain 2"/>
    <property type="match status" value="1"/>
</dbReference>
<dbReference type="Gene3D" id="3.30.980.10">
    <property type="entry name" value="Threonyl-trna Synthetase, Chain A, domain 2"/>
    <property type="match status" value="1"/>
</dbReference>
<dbReference type="HAMAP" id="MF_00036_B">
    <property type="entry name" value="Ala_tRNA_synth_B"/>
    <property type="match status" value="1"/>
</dbReference>
<dbReference type="InterPro" id="IPR045864">
    <property type="entry name" value="aa-tRNA-synth_II/BPL/LPL"/>
</dbReference>
<dbReference type="InterPro" id="IPR002318">
    <property type="entry name" value="Ala-tRNA-lgiase_IIc"/>
</dbReference>
<dbReference type="InterPro" id="IPR018162">
    <property type="entry name" value="Ala-tRNA-ligase_IIc_anticod-bd"/>
</dbReference>
<dbReference type="InterPro" id="IPR018165">
    <property type="entry name" value="Ala-tRNA-synth_IIc_core"/>
</dbReference>
<dbReference type="InterPro" id="IPR018164">
    <property type="entry name" value="Ala-tRNA-synth_IIc_N"/>
</dbReference>
<dbReference type="InterPro" id="IPR050058">
    <property type="entry name" value="Ala-tRNA_ligase"/>
</dbReference>
<dbReference type="InterPro" id="IPR023033">
    <property type="entry name" value="Ala_tRNA_ligase_euk/bac"/>
</dbReference>
<dbReference type="InterPro" id="IPR003156">
    <property type="entry name" value="DHHA1_dom"/>
</dbReference>
<dbReference type="InterPro" id="IPR018163">
    <property type="entry name" value="Thr/Ala-tRNA-synth_IIc_edit"/>
</dbReference>
<dbReference type="InterPro" id="IPR009000">
    <property type="entry name" value="Transl_B-barrel_sf"/>
</dbReference>
<dbReference type="InterPro" id="IPR012947">
    <property type="entry name" value="tRNA_SAD"/>
</dbReference>
<dbReference type="NCBIfam" id="TIGR00344">
    <property type="entry name" value="alaS"/>
    <property type="match status" value="1"/>
</dbReference>
<dbReference type="PANTHER" id="PTHR11777:SF9">
    <property type="entry name" value="ALANINE--TRNA LIGASE, CYTOPLASMIC"/>
    <property type="match status" value="1"/>
</dbReference>
<dbReference type="PANTHER" id="PTHR11777">
    <property type="entry name" value="ALANYL-TRNA SYNTHETASE"/>
    <property type="match status" value="1"/>
</dbReference>
<dbReference type="Pfam" id="PF02272">
    <property type="entry name" value="DHHA1"/>
    <property type="match status" value="1"/>
</dbReference>
<dbReference type="Pfam" id="PF01411">
    <property type="entry name" value="tRNA-synt_2c"/>
    <property type="match status" value="1"/>
</dbReference>
<dbReference type="Pfam" id="PF07973">
    <property type="entry name" value="tRNA_SAD"/>
    <property type="match status" value="1"/>
</dbReference>
<dbReference type="PRINTS" id="PR00980">
    <property type="entry name" value="TRNASYNTHALA"/>
</dbReference>
<dbReference type="SMART" id="SM00863">
    <property type="entry name" value="tRNA_SAD"/>
    <property type="match status" value="1"/>
</dbReference>
<dbReference type="SUPFAM" id="SSF55681">
    <property type="entry name" value="Class II aaRS and biotin synthetases"/>
    <property type="match status" value="1"/>
</dbReference>
<dbReference type="SUPFAM" id="SSF101353">
    <property type="entry name" value="Putative anticodon-binding domain of alanyl-tRNA synthetase (AlaRS)"/>
    <property type="match status" value="1"/>
</dbReference>
<dbReference type="SUPFAM" id="SSF55186">
    <property type="entry name" value="ThrRS/AlaRS common domain"/>
    <property type="match status" value="1"/>
</dbReference>
<dbReference type="SUPFAM" id="SSF50447">
    <property type="entry name" value="Translation proteins"/>
    <property type="match status" value="1"/>
</dbReference>
<dbReference type="PROSITE" id="PS50860">
    <property type="entry name" value="AA_TRNA_LIGASE_II_ALA"/>
    <property type="match status" value="1"/>
</dbReference>
<evidence type="ECO:0000255" key="1">
    <source>
        <dbReference type="HAMAP-Rule" id="MF_00036"/>
    </source>
</evidence>
<organism>
    <name type="scientific">Francisella tularensis subsp. novicida (strain U112)</name>
    <dbReference type="NCBI Taxonomy" id="401614"/>
    <lineage>
        <taxon>Bacteria</taxon>
        <taxon>Pseudomonadati</taxon>
        <taxon>Pseudomonadota</taxon>
        <taxon>Gammaproteobacteria</taxon>
        <taxon>Thiotrichales</taxon>
        <taxon>Francisellaceae</taxon>
        <taxon>Francisella</taxon>
    </lineage>
</organism>
<sequence>MITTKELRNKFINYFESKNHSHQPSSSLIPFGDDTLLFTNAGMVQFKDVFLGIEKKDFSRAVTVQKCLRAGGKHNDLDNVGYTARHHTFFEMLGNFSFGDYFKKDAISFAWEFLTKEIKLPIEKLWVTIYASDDEAFDVWHKHIGLAKERIIRIDSSDNFWSMGDTGPCGPCTEIFYDHGEDVAGGLPGTPEQDGDRYIEIWNIVFMQYNRHADGSTTDLPKPSVDTGMGLERISAVLQNVHSNYEIDLFQALIKKAQQVTHAKDINSPSLKVIADHIRACAFLIADGVLPANEGRGYVLRRIIRRAIRHGNKVGAKEIFFYKLVAELVNQMGEAYSQLIDKRELIEKTLIKEEELFLKTIENGIKIFDAEIENLKDNTISGEVAFKLYDTYGFPFDLTADMAREKGLKVDEQAFLAQMQIQKQRSKEAGKFNVDYNSLINSQVKSEFRGYSTLIEDAKVLEIYQDGQLVASTSEQVPAVVVLDKTPFYAESGGQVGDKGILEGVGFEFVVEDVQKSGEAILHIGKLVKGRLNLNDELTARVSDQPRLATAANHSATHLLHKALKLVLGGHAEQKGSLVDENRLRFDFTHDKAISRSEIEQIELLVNQQIRANYPVTTIETSQQKAKSLGAEALFGEKYGDIVRVISMGDFSIELCGGTHVAYTGDIGLFKIISEGGIASGVRRIEAVTADKAIRHTFTNENKIIAIKDSLKANDANLIDKIKSMLEQIKNQEKQIAKLKKELLSGSSNDIKETNIGDIKVVVANVDGVDVKTLRDKIDDYKSKNTKVIAVLTTTNADKVQFVIGVSNAITTLIKAGDIAKELSSHIDGKGGGRADMAQGGGNNSANIDQALSQVEKFILNNIKE</sequence>